<protein>
    <recommendedName>
        <fullName>LOB domain-containing protein 30</fullName>
    </recommendedName>
    <alternativeName>
        <fullName>ASYMMETRIC LEAVES 2-like protein 19</fullName>
        <shortName>AS2-like protein 19</shortName>
    </alternativeName>
</protein>
<organism>
    <name type="scientific">Arabidopsis thaliana</name>
    <name type="common">Mouse-ear cress</name>
    <dbReference type="NCBI Taxonomy" id="3702"/>
    <lineage>
        <taxon>Eukaryota</taxon>
        <taxon>Viridiplantae</taxon>
        <taxon>Streptophyta</taxon>
        <taxon>Embryophyta</taxon>
        <taxon>Tracheophyta</taxon>
        <taxon>Spermatophyta</taxon>
        <taxon>Magnoliopsida</taxon>
        <taxon>eudicotyledons</taxon>
        <taxon>Gunneridae</taxon>
        <taxon>Pentapetalae</taxon>
        <taxon>rosids</taxon>
        <taxon>malvids</taxon>
        <taxon>Brassicales</taxon>
        <taxon>Brassicaceae</taxon>
        <taxon>Camelineae</taxon>
        <taxon>Arabidopsis</taxon>
    </lineage>
</organism>
<proteinExistence type="evidence at protein level"/>
<feature type="chain" id="PRO_0000132281" description="LOB domain-containing protein 30">
    <location>
        <begin position="1"/>
        <end position="228"/>
    </location>
</feature>
<feature type="domain" description="LOB" evidence="1">
    <location>
        <begin position="16"/>
        <end position="118"/>
    </location>
</feature>
<feature type="region of interest" description="Disordered" evidence="2">
    <location>
        <begin position="188"/>
        <end position="228"/>
    </location>
</feature>
<feature type="compositionally biased region" description="Polar residues" evidence="2">
    <location>
        <begin position="214"/>
        <end position="228"/>
    </location>
</feature>
<sequence length="228" mass="23968">MSSSGNPSSSSGGGGGPCGACKFLRRKCVAGCIFAPYFDSEQGAAHFAAVHKVFGASNVSKLLHHVPEHKRPDAVVSICFEAQARLRDPIYGCVSHIVSLQQQVVSLQTELSYLQAHLATLELPQPQPPQVPVSSSGSLQALSITDLPTISPSVYDLSSIFEPVMSSTWAMQQQPRPSDHLFGVPSSSNMGGGGELQALAREFIHGGQMPAQPSPGTSGSASSVIKRE</sequence>
<gene>
    <name type="primary">LBD30</name>
    <name type="synonym">ASL19</name>
    <name type="ordered locus">At4g00220</name>
    <name type="ORF">F6N15.4</name>
</gene>
<accession>O81323</accession>
<accession>A0MF43</accession>
<accession>B7XG73</accession>
<accession>Q1PED1</accession>
<comment type="function">
    <text evidence="4">Involved in the positive regulation of tracheary element (TE) differentiation. Involved in a positive feedback loop that maintains or promotes NAC030/VND7 expression that regulates TE differentiation-related genes.</text>
</comment>
<comment type="interaction">
    <interactant intactId="EBI-15201724">
        <id>O81323</id>
    </interactant>
    <interactant intactId="EBI-4445715">
        <id>Q9SHE9</id>
        <label>LBD4</label>
    </interactant>
    <organismsDiffer>false</organismsDiffer>
    <experiments>3</experiments>
</comment>
<comment type="interaction">
    <interactant intactId="EBI-15201724">
        <id>O81323</id>
    </interactant>
    <interactant intactId="EBI-4424563">
        <id>Q93Z00</id>
        <label>TCP14</label>
    </interactant>
    <organismsDiffer>false</organismsDiffer>
    <experiments>3</experiments>
</comment>
<comment type="tissue specificity">
    <text evidence="3 4">Expressed in roots, stems, leaves and flowers (PubMed:12068116). Expressed in vascular tissues of hypocotyls, leaves, roots, developing floral organs and siliques (PubMed:19088331).</text>
</comment>
<comment type="miscellaneous">
    <text evidence="4">Plants over-expressing LBD30 have a dwarf and bushy phenotype, with short petioles, curled downward leaves, ectopic shoots from the adaxial side of cotyledons, shrunken root tips and disorganized columella cells.</text>
</comment>
<comment type="similarity">
    <text evidence="5">Belongs to the LOB domain-containing protein family.</text>
</comment>
<comment type="sequence caution" evidence="5">
    <conflict type="erroneous termination">
        <sequence resource="EMBL-CDS" id="ABK28616"/>
    </conflict>
    <text>Extended C-terminus.</text>
</comment>
<dbReference type="EMBL" id="AF432232">
    <property type="protein sequence ID" value="AAL27613.1"/>
    <property type="molecule type" value="mRNA"/>
</dbReference>
<dbReference type="EMBL" id="AB473852">
    <property type="protein sequence ID" value="BAH10563.1"/>
    <property type="molecule type" value="mRNA"/>
</dbReference>
<dbReference type="EMBL" id="AF069299">
    <property type="protein sequence ID" value="AAC19300.1"/>
    <property type="molecule type" value="Genomic_DNA"/>
</dbReference>
<dbReference type="EMBL" id="AL161471">
    <property type="protein sequence ID" value="CAB80780.1"/>
    <property type="molecule type" value="Genomic_DNA"/>
</dbReference>
<dbReference type="EMBL" id="CP002687">
    <property type="protein sequence ID" value="AEE81839.1"/>
    <property type="molecule type" value="Genomic_DNA"/>
</dbReference>
<dbReference type="EMBL" id="DQ446787">
    <property type="protein sequence ID" value="ABE66037.1"/>
    <property type="molecule type" value="mRNA"/>
</dbReference>
<dbReference type="EMBL" id="DQ653168">
    <property type="protein sequence ID" value="ABK28616.1"/>
    <property type="status" value="ALT_SEQ"/>
    <property type="molecule type" value="mRNA"/>
</dbReference>
<dbReference type="EMBL" id="BT026407">
    <property type="protein sequence ID" value="ABH04514.1"/>
    <property type="molecule type" value="mRNA"/>
</dbReference>
<dbReference type="PIR" id="T01350">
    <property type="entry name" value="T01350"/>
</dbReference>
<dbReference type="RefSeq" id="NP_191933.1">
    <property type="nucleotide sequence ID" value="NM_116239.4"/>
</dbReference>
<dbReference type="SMR" id="O81323"/>
<dbReference type="BioGRID" id="13375">
    <property type="interactions" value="11"/>
</dbReference>
<dbReference type="FunCoup" id="O81323">
    <property type="interactions" value="4"/>
</dbReference>
<dbReference type="IntAct" id="O81323">
    <property type="interactions" value="6"/>
</dbReference>
<dbReference type="STRING" id="3702.O81323"/>
<dbReference type="PaxDb" id="3702-AT4G00220.1"/>
<dbReference type="ProteomicsDB" id="250726"/>
<dbReference type="EnsemblPlants" id="AT4G00220.1">
    <property type="protein sequence ID" value="AT4G00220.1"/>
    <property type="gene ID" value="AT4G00220"/>
</dbReference>
<dbReference type="GeneID" id="828084"/>
<dbReference type="Gramene" id="AT4G00220.1">
    <property type="protein sequence ID" value="AT4G00220.1"/>
    <property type="gene ID" value="AT4G00220"/>
</dbReference>
<dbReference type="KEGG" id="ath:AT4G00220"/>
<dbReference type="Araport" id="AT4G00220"/>
<dbReference type="TAIR" id="AT4G00220">
    <property type="gene designation" value="JLO"/>
</dbReference>
<dbReference type="eggNOG" id="ENOG502QR68">
    <property type="taxonomic scope" value="Eukaryota"/>
</dbReference>
<dbReference type="HOGENOM" id="CLU_058353_3_5_1"/>
<dbReference type="InParanoid" id="O81323"/>
<dbReference type="OMA" id="STWAMQQ"/>
<dbReference type="PhylomeDB" id="O81323"/>
<dbReference type="PRO" id="PR:O81323"/>
<dbReference type="Proteomes" id="UP000006548">
    <property type="component" value="Chromosome 4"/>
</dbReference>
<dbReference type="ExpressionAtlas" id="O81323">
    <property type="expression patterns" value="baseline and differential"/>
</dbReference>
<dbReference type="GO" id="GO:0010199">
    <property type="term" value="P:organ boundary specification between lateral organs and the meristem"/>
    <property type="evidence" value="ECO:0000315"/>
    <property type="project" value="TAIR"/>
</dbReference>
<dbReference type="GO" id="GO:0010089">
    <property type="term" value="P:xylem development"/>
    <property type="evidence" value="ECO:0000315"/>
    <property type="project" value="TAIR"/>
</dbReference>
<dbReference type="InterPro" id="IPR004883">
    <property type="entry name" value="LOB"/>
</dbReference>
<dbReference type="PANTHER" id="PTHR31529">
    <property type="entry name" value="LOB DOMAIN CONTAINING PROTEIN"/>
    <property type="match status" value="1"/>
</dbReference>
<dbReference type="PANTHER" id="PTHR31529:SF4">
    <property type="entry name" value="LOB DOMAIN-CONTAINING PROTEIN 30"/>
    <property type="match status" value="1"/>
</dbReference>
<dbReference type="Pfam" id="PF03195">
    <property type="entry name" value="LOB"/>
    <property type="match status" value="1"/>
</dbReference>
<dbReference type="PROSITE" id="PS50891">
    <property type="entry name" value="LOB"/>
    <property type="match status" value="1"/>
</dbReference>
<keyword id="KW-1185">Reference proteome</keyword>
<reference key="1">
    <citation type="journal article" date="2002" name="Plant Physiol.">
        <title>The LATERAL ORGAN BOUNDARIES gene defines a novel, plant-specific gene family.</title>
        <authorList>
            <person name="Shuai B."/>
            <person name="Reynaga-Pena C.G."/>
            <person name="Springer P.S."/>
        </authorList>
    </citation>
    <scope>NUCLEOTIDE SEQUENCE [MRNA]</scope>
    <scope>TISSUE SPECIFICITY</scope>
    <scope>GENE FAMILY</scope>
    <scope>NOMENCLATURE</scope>
    <source>
        <strain>cv. Columbia</strain>
    </source>
</reference>
<reference key="2">
    <citation type="journal article" date="2009" name="Plant J.">
        <title>Characterization of genes in the ASYMMETRIC LEAVES2/LATERAL ORGAN BOUNDARIES (AS2/LOB) family in Arabidopsis thaliana, and functional and molecular comparisons between AS2 and other family members.</title>
        <authorList>
            <person name="Matsumura Y."/>
            <person name="Iwakawa H."/>
            <person name="Machida Y."/>
            <person name="Machida C."/>
        </authorList>
    </citation>
    <scope>NUCLEOTIDE SEQUENCE [MRNA]</scope>
    <source>
        <strain>cv. Columbia</strain>
    </source>
</reference>
<reference key="3">
    <citation type="journal article" date="1999" name="Nature">
        <title>Sequence and analysis of chromosome 4 of the plant Arabidopsis thaliana.</title>
        <authorList>
            <person name="Mayer K.F.X."/>
            <person name="Schueller C."/>
            <person name="Wambutt R."/>
            <person name="Murphy G."/>
            <person name="Volckaert G."/>
            <person name="Pohl T."/>
            <person name="Duesterhoeft A."/>
            <person name="Stiekema W."/>
            <person name="Entian K.-D."/>
            <person name="Terryn N."/>
            <person name="Harris B."/>
            <person name="Ansorge W."/>
            <person name="Brandt P."/>
            <person name="Grivell L.A."/>
            <person name="Rieger M."/>
            <person name="Weichselgartner M."/>
            <person name="de Simone V."/>
            <person name="Obermaier B."/>
            <person name="Mache R."/>
            <person name="Mueller M."/>
            <person name="Kreis M."/>
            <person name="Delseny M."/>
            <person name="Puigdomenech P."/>
            <person name="Watson M."/>
            <person name="Schmidtheini T."/>
            <person name="Reichert B."/>
            <person name="Portetelle D."/>
            <person name="Perez-Alonso M."/>
            <person name="Boutry M."/>
            <person name="Bancroft I."/>
            <person name="Vos P."/>
            <person name="Hoheisel J."/>
            <person name="Zimmermann W."/>
            <person name="Wedler H."/>
            <person name="Ridley P."/>
            <person name="Langham S.-A."/>
            <person name="McCullagh B."/>
            <person name="Bilham L."/>
            <person name="Robben J."/>
            <person name="van der Schueren J."/>
            <person name="Grymonprez B."/>
            <person name="Chuang Y.-J."/>
            <person name="Vandenbussche F."/>
            <person name="Braeken M."/>
            <person name="Weltjens I."/>
            <person name="Voet M."/>
            <person name="Bastiaens I."/>
            <person name="Aert R."/>
            <person name="Defoor E."/>
            <person name="Weitzenegger T."/>
            <person name="Bothe G."/>
            <person name="Ramsperger U."/>
            <person name="Hilbert H."/>
            <person name="Braun M."/>
            <person name="Holzer E."/>
            <person name="Brandt A."/>
            <person name="Peters S."/>
            <person name="van Staveren M."/>
            <person name="Dirkse W."/>
            <person name="Mooijman P."/>
            <person name="Klein Lankhorst R."/>
            <person name="Rose M."/>
            <person name="Hauf J."/>
            <person name="Koetter P."/>
            <person name="Berneiser S."/>
            <person name="Hempel S."/>
            <person name="Feldpausch M."/>
            <person name="Lamberth S."/>
            <person name="Van den Daele H."/>
            <person name="De Keyser A."/>
            <person name="Buysshaert C."/>
            <person name="Gielen J."/>
            <person name="Villarroel R."/>
            <person name="De Clercq R."/>
            <person name="van Montagu M."/>
            <person name="Rogers J."/>
            <person name="Cronin A."/>
            <person name="Quail M.A."/>
            <person name="Bray-Allen S."/>
            <person name="Clark L."/>
            <person name="Doggett J."/>
            <person name="Hall S."/>
            <person name="Kay M."/>
            <person name="Lennard N."/>
            <person name="McLay K."/>
            <person name="Mayes R."/>
            <person name="Pettett A."/>
            <person name="Rajandream M.A."/>
            <person name="Lyne M."/>
            <person name="Benes V."/>
            <person name="Rechmann S."/>
            <person name="Borkova D."/>
            <person name="Bloecker H."/>
            <person name="Scharfe M."/>
            <person name="Grimm M."/>
            <person name="Loehnert T.-H."/>
            <person name="Dose S."/>
            <person name="de Haan M."/>
            <person name="Maarse A.C."/>
            <person name="Schaefer M."/>
            <person name="Mueller-Auer S."/>
            <person name="Gabel C."/>
            <person name="Fuchs M."/>
            <person name="Fartmann B."/>
            <person name="Granderath K."/>
            <person name="Dauner D."/>
            <person name="Herzl A."/>
            <person name="Neumann S."/>
            <person name="Argiriou A."/>
            <person name="Vitale D."/>
            <person name="Liguori R."/>
            <person name="Piravandi E."/>
            <person name="Massenet O."/>
            <person name="Quigley F."/>
            <person name="Clabauld G."/>
            <person name="Muendlein A."/>
            <person name="Felber R."/>
            <person name="Schnabl S."/>
            <person name="Hiller R."/>
            <person name="Schmidt W."/>
            <person name="Lecharny A."/>
            <person name="Aubourg S."/>
            <person name="Chefdor F."/>
            <person name="Cooke R."/>
            <person name="Berger C."/>
            <person name="Monfort A."/>
            <person name="Casacuberta E."/>
            <person name="Gibbons T."/>
            <person name="Weber N."/>
            <person name="Vandenbol M."/>
            <person name="Bargues M."/>
            <person name="Terol J."/>
            <person name="Torres A."/>
            <person name="Perez-Perez A."/>
            <person name="Purnelle B."/>
            <person name="Bent E."/>
            <person name="Johnson S."/>
            <person name="Tacon D."/>
            <person name="Jesse T."/>
            <person name="Heijnen L."/>
            <person name="Schwarz S."/>
            <person name="Scholler P."/>
            <person name="Heber S."/>
            <person name="Francs P."/>
            <person name="Bielke C."/>
            <person name="Frishman D."/>
            <person name="Haase D."/>
            <person name="Lemcke K."/>
            <person name="Mewes H.-W."/>
            <person name="Stocker S."/>
            <person name="Zaccaria P."/>
            <person name="Bevan M."/>
            <person name="Wilson R.K."/>
            <person name="de la Bastide M."/>
            <person name="Habermann K."/>
            <person name="Parnell L."/>
            <person name="Dedhia N."/>
            <person name="Gnoj L."/>
            <person name="Schutz K."/>
            <person name="Huang E."/>
            <person name="Spiegel L."/>
            <person name="Sekhon M."/>
            <person name="Murray J."/>
            <person name="Sheet P."/>
            <person name="Cordes M."/>
            <person name="Abu-Threideh J."/>
            <person name="Stoneking T."/>
            <person name="Kalicki J."/>
            <person name="Graves T."/>
            <person name="Harmon G."/>
            <person name="Edwards J."/>
            <person name="Latreille P."/>
            <person name="Courtney L."/>
            <person name="Cloud J."/>
            <person name="Abbott A."/>
            <person name="Scott K."/>
            <person name="Johnson D."/>
            <person name="Minx P."/>
            <person name="Bentley D."/>
            <person name="Fulton B."/>
            <person name="Miller N."/>
            <person name="Greco T."/>
            <person name="Kemp K."/>
            <person name="Kramer J."/>
            <person name="Fulton L."/>
            <person name="Mardis E."/>
            <person name="Dante M."/>
            <person name="Pepin K."/>
            <person name="Hillier L.W."/>
            <person name="Nelson J."/>
            <person name="Spieth J."/>
            <person name="Ryan E."/>
            <person name="Andrews S."/>
            <person name="Geisel C."/>
            <person name="Layman D."/>
            <person name="Du H."/>
            <person name="Ali J."/>
            <person name="Berghoff A."/>
            <person name="Jones K."/>
            <person name="Drone K."/>
            <person name="Cotton M."/>
            <person name="Joshu C."/>
            <person name="Antonoiu B."/>
            <person name="Zidanic M."/>
            <person name="Strong C."/>
            <person name="Sun H."/>
            <person name="Lamar B."/>
            <person name="Yordan C."/>
            <person name="Ma P."/>
            <person name="Zhong J."/>
            <person name="Preston R."/>
            <person name="Vil D."/>
            <person name="Shekher M."/>
            <person name="Matero A."/>
            <person name="Shah R."/>
            <person name="Swaby I.K."/>
            <person name="O'Shaughnessy A."/>
            <person name="Rodriguez M."/>
            <person name="Hoffman J."/>
            <person name="Till S."/>
            <person name="Granat S."/>
            <person name="Shohdy N."/>
            <person name="Hasegawa A."/>
            <person name="Hameed A."/>
            <person name="Lodhi M."/>
            <person name="Johnson A."/>
            <person name="Chen E."/>
            <person name="Marra M.A."/>
            <person name="Martienssen R."/>
            <person name="McCombie W.R."/>
        </authorList>
    </citation>
    <scope>NUCLEOTIDE SEQUENCE [LARGE SCALE GENOMIC DNA]</scope>
    <source>
        <strain>cv. Columbia</strain>
    </source>
</reference>
<reference key="4">
    <citation type="journal article" date="2017" name="Plant J.">
        <title>Araport11: a complete reannotation of the Arabidopsis thaliana reference genome.</title>
        <authorList>
            <person name="Cheng C.Y."/>
            <person name="Krishnakumar V."/>
            <person name="Chan A.P."/>
            <person name="Thibaud-Nissen F."/>
            <person name="Schobel S."/>
            <person name="Town C.D."/>
        </authorList>
    </citation>
    <scope>GENOME REANNOTATION</scope>
    <source>
        <strain>cv. Columbia</strain>
    </source>
</reference>
<reference key="5">
    <citation type="journal article" date="2006" name="Plant Biotechnol. J.">
        <title>Simultaneous high-throughput recombinational cloning of open reading frames in closed and open configurations.</title>
        <authorList>
            <person name="Underwood B.A."/>
            <person name="Vanderhaeghen R."/>
            <person name="Whitford R."/>
            <person name="Town C.D."/>
            <person name="Hilson P."/>
        </authorList>
    </citation>
    <scope>NUCLEOTIDE SEQUENCE [LARGE SCALE MRNA]</scope>
    <source>
        <strain>cv. Columbia</strain>
    </source>
</reference>
<reference key="6">
    <citation type="submission" date="2006-08" db="EMBL/GenBank/DDBJ databases">
        <title>Arabidopsis ORF clones.</title>
        <authorList>
            <person name="Quinitio C."/>
            <person name="Chen H."/>
            <person name="Kim C.J."/>
            <person name="Shinn P."/>
            <person name="Ecker J.R."/>
        </authorList>
    </citation>
    <scope>NUCLEOTIDE SEQUENCE [LARGE SCALE MRNA]</scope>
    <source>
        <strain>cv. Columbia</strain>
    </source>
</reference>
<reference key="7">
    <citation type="journal article" date="2002" name="Plant Cell Physiol.">
        <title>The ASYMMETRIC LEAVES2 gene of Arabidopsis thaliana, required for formation of a symmetric flat leaf lamina, encodes a member of a novel family of proteins characterized by cysteine repeats and a leucine zipper.</title>
        <authorList>
            <person name="Iwakawa H."/>
            <person name="Ueno Y."/>
            <person name="Semiarti E."/>
            <person name="Onouchi H."/>
            <person name="Kojima S."/>
            <person name="Tsukaya H."/>
            <person name="Hasebe M."/>
            <person name="Soma T."/>
            <person name="Ikezaki M."/>
            <person name="Machida C."/>
            <person name="Machida Y."/>
        </authorList>
    </citation>
    <scope>GENE FAMILY</scope>
    <scope>NOMENCLATURE</scope>
</reference>
<reference key="8">
    <citation type="journal article" date="2008" name="Plant Cell">
        <title>ASYMMETRIC LEAVES2-LIKE19/LATERAL ORGAN BOUNDARIES DOMAIN30 and ASL20/LBD18 regulate tracheary element differentiation in Arabidopsis.</title>
        <authorList>
            <person name="Soyano T."/>
            <person name="Thitamadee S."/>
            <person name="Machida Y."/>
            <person name="Chua N.-H."/>
        </authorList>
    </citation>
    <scope>FUNCTION</scope>
    <scope>TISSUE SPECIFICITY</scope>
</reference>
<name>LBD30_ARATH</name>
<evidence type="ECO:0000255" key="1">
    <source>
        <dbReference type="PROSITE-ProRule" id="PRU00291"/>
    </source>
</evidence>
<evidence type="ECO:0000256" key="2">
    <source>
        <dbReference type="SAM" id="MobiDB-lite"/>
    </source>
</evidence>
<evidence type="ECO:0000269" key="3">
    <source>
    </source>
</evidence>
<evidence type="ECO:0000269" key="4">
    <source>
    </source>
</evidence>
<evidence type="ECO:0000305" key="5"/>